<protein>
    <recommendedName>
        <fullName evidence="1">2,3-bisphosphoglycerate-independent phosphoglycerate mutase</fullName>
        <shortName evidence="1">BPG-independent PGAM</shortName>
        <shortName evidence="1">Phosphoglyceromutase</shortName>
        <shortName evidence="1">iPGM</shortName>
        <ecNumber evidence="1">5.4.2.12</ecNumber>
    </recommendedName>
</protein>
<proteinExistence type="inferred from homology"/>
<gene>
    <name evidence="1" type="primary">gpmI</name>
    <name type="ordered locus">VP2829</name>
</gene>
<sequence length="510" mass="55118">MSAKKPLALVILDGYGYREDTASNAIANAKTPVMDALIANNPHTLISASGMDVGLPDGQMGNSEVGHTNIGAGRVVYQDLTRITKSIADGEFEQTPALVEAIDAAVKAEKAVHIMGLMSPGGVHSHEDHIYAAVEMAAARGAEKIYLHCFLDGRDTPPRSAENSLQRFQDLFAKLGKGRVASLVGRYYAMDRDNNWERVQVAYDLLTQAKAEFTAETAVAGLEAAYARDENDEFVKATAIKAEGQEDAIMQDGDAVIFMNYRADRARQITRAFVPGFDGFERAVFPAINFVMLTQYAADIPLATAFPPASLENTYGEWLSKQGQTQLRISETEKYAHVTFFFNGGVENEFEGEERQLVASPKVATYDLQPEMSSPELTEKLVAAIKSGKYDTIICNYPNADMVGHTGVYEAAEKAIEALDESVGKVVEAIKEVGGQLLITADHGNAEMMIDPETGGVHTAHTNLPVPLIYVGDKAVEFKEGGKLSDLAPTMLSLAGLEIPAEMSGDVLVK</sequence>
<reference key="1">
    <citation type="journal article" date="2003" name="Lancet">
        <title>Genome sequence of Vibrio parahaemolyticus: a pathogenic mechanism distinct from that of V. cholerae.</title>
        <authorList>
            <person name="Makino K."/>
            <person name="Oshima K."/>
            <person name="Kurokawa K."/>
            <person name="Yokoyama K."/>
            <person name="Uda T."/>
            <person name="Tagomori K."/>
            <person name="Iijima Y."/>
            <person name="Najima M."/>
            <person name="Nakano M."/>
            <person name="Yamashita A."/>
            <person name="Kubota Y."/>
            <person name="Kimura S."/>
            <person name="Yasunaga T."/>
            <person name="Honda T."/>
            <person name="Shinagawa H."/>
            <person name="Hattori M."/>
            <person name="Iida T."/>
        </authorList>
    </citation>
    <scope>NUCLEOTIDE SEQUENCE [LARGE SCALE GENOMIC DNA]</scope>
    <source>
        <strain>RIMD 2210633</strain>
    </source>
</reference>
<comment type="function">
    <text evidence="1">Catalyzes the interconversion of 2-phosphoglycerate and 3-phosphoglycerate.</text>
</comment>
<comment type="catalytic activity">
    <reaction evidence="1">
        <text>(2R)-2-phosphoglycerate = (2R)-3-phosphoglycerate</text>
        <dbReference type="Rhea" id="RHEA:15901"/>
        <dbReference type="ChEBI" id="CHEBI:58272"/>
        <dbReference type="ChEBI" id="CHEBI:58289"/>
        <dbReference type="EC" id="5.4.2.12"/>
    </reaction>
</comment>
<comment type="cofactor">
    <cofactor evidence="1">
        <name>Mn(2+)</name>
        <dbReference type="ChEBI" id="CHEBI:29035"/>
    </cofactor>
    <text evidence="1">Binds 2 manganese ions per subunit.</text>
</comment>
<comment type="pathway">
    <text evidence="1">Carbohydrate degradation; glycolysis; pyruvate from D-glyceraldehyde 3-phosphate: step 3/5.</text>
</comment>
<comment type="subunit">
    <text evidence="1">Monomer.</text>
</comment>
<comment type="similarity">
    <text evidence="1">Belongs to the BPG-independent phosphoglycerate mutase family.</text>
</comment>
<feature type="chain" id="PRO_0000212228" description="2,3-bisphosphoglycerate-independent phosphoglycerate mutase">
    <location>
        <begin position="1"/>
        <end position="510"/>
    </location>
</feature>
<feature type="active site" description="Phosphoserine intermediate" evidence="1">
    <location>
        <position position="63"/>
    </location>
</feature>
<feature type="binding site" evidence="1">
    <location>
        <position position="13"/>
    </location>
    <ligand>
        <name>Mn(2+)</name>
        <dbReference type="ChEBI" id="CHEBI:29035"/>
        <label>2</label>
    </ligand>
</feature>
<feature type="binding site" evidence="1">
    <location>
        <position position="63"/>
    </location>
    <ligand>
        <name>Mn(2+)</name>
        <dbReference type="ChEBI" id="CHEBI:29035"/>
        <label>2</label>
    </ligand>
</feature>
<feature type="binding site" evidence="1">
    <location>
        <position position="124"/>
    </location>
    <ligand>
        <name>substrate</name>
    </ligand>
</feature>
<feature type="binding site" evidence="1">
    <location>
        <begin position="154"/>
        <end position="155"/>
    </location>
    <ligand>
        <name>substrate</name>
    </ligand>
</feature>
<feature type="binding site" evidence="1">
    <location>
        <position position="186"/>
    </location>
    <ligand>
        <name>substrate</name>
    </ligand>
</feature>
<feature type="binding site" evidence="1">
    <location>
        <position position="192"/>
    </location>
    <ligand>
        <name>substrate</name>
    </ligand>
</feature>
<feature type="binding site" evidence="1">
    <location>
        <begin position="262"/>
        <end position="265"/>
    </location>
    <ligand>
        <name>substrate</name>
    </ligand>
</feature>
<feature type="binding site" evidence="1">
    <location>
        <position position="334"/>
    </location>
    <ligand>
        <name>substrate</name>
    </ligand>
</feature>
<feature type="binding site" evidence="1">
    <location>
        <position position="401"/>
    </location>
    <ligand>
        <name>Mn(2+)</name>
        <dbReference type="ChEBI" id="CHEBI:29035"/>
        <label>1</label>
    </ligand>
</feature>
<feature type="binding site" evidence="1">
    <location>
        <position position="405"/>
    </location>
    <ligand>
        <name>Mn(2+)</name>
        <dbReference type="ChEBI" id="CHEBI:29035"/>
        <label>1</label>
    </ligand>
</feature>
<feature type="binding site" evidence="1">
    <location>
        <position position="442"/>
    </location>
    <ligand>
        <name>Mn(2+)</name>
        <dbReference type="ChEBI" id="CHEBI:29035"/>
        <label>2</label>
    </ligand>
</feature>
<feature type="binding site" evidence="1">
    <location>
        <position position="443"/>
    </location>
    <ligand>
        <name>Mn(2+)</name>
        <dbReference type="ChEBI" id="CHEBI:29035"/>
        <label>2</label>
    </ligand>
</feature>
<feature type="binding site" evidence="1">
    <location>
        <position position="461"/>
    </location>
    <ligand>
        <name>Mn(2+)</name>
        <dbReference type="ChEBI" id="CHEBI:29035"/>
        <label>1</label>
    </ligand>
</feature>
<keyword id="KW-0324">Glycolysis</keyword>
<keyword id="KW-0413">Isomerase</keyword>
<keyword id="KW-0464">Manganese</keyword>
<keyword id="KW-0479">Metal-binding</keyword>
<evidence type="ECO:0000255" key="1">
    <source>
        <dbReference type="HAMAP-Rule" id="MF_01038"/>
    </source>
</evidence>
<accession>Q87KZ5</accession>
<name>GPMI_VIBPA</name>
<organism>
    <name type="scientific">Vibrio parahaemolyticus serotype O3:K6 (strain RIMD 2210633)</name>
    <dbReference type="NCBI Taxonomy" id="223926"/>
    <lineage>
        <taxon>Bacteria</taxon>
        <taxon>Pseudomonadati</taxon>
        <taxon>Pseudomonadota</taxon>
        <taxon>Gammaproteobacteria</taxon>
        <taxon>Vibrionales</taxon>
        <taxon>Vibrionaceae</taxon>
        <taxon>Vibrio</taxon>
    </lineage>
</organism>
<dbReference type="EC" id="5.4.2.12" evidence="1"/>
<dbReference type="EMBL" id="BA000031">
    <property type="protein sequence ID" value="BAC61092.1"/>
    <property type="molecule type" value="Genomic_DNA"/>
</dbReference>
<dbReference type="RefSeq" id="NP_799208.1">
    <property type="nucleotide sequence ID" value="NC_004603.1"/>
</dbReference>
<dbReference type="SMR" id="Q87KZ5"/>
<dbReference type="GeneID" id="1190392"/>
<dbReference type="KEGG" id="vpa:VP2829"/>
<dbReference type="PATRIC" id="fig|223926.6.peg.2720"/>
<dbReference type="eggNOG" id="COG0696">
    <property type="taxonomic scope" value="Bacteria"/>
</dbReference>
<dbReference type="HOGENOM" id="CLU_026099_2_0_6"/>
<dbReference type="UniPathway" id="UPA00109">
    <property type="reaction ID" value="UER00186"/>
</dbReference>
<dbReference type="Proteomes" id="UP000002493">
    <property type="component" value="Chromosome 1"/>
</dbReference>
<dbReference type="GO" id="GO:0005829">
    <property type="term" value="C:cytosol"/>
    <property type="evidence" value="ECO:0007669"/>
    <property type="project" value="TreeGrafter"/>
</dbReference>
<dbReference type="GO" id="GO:0030145">
    <property type="term" value="F:manganese ion binding"/>
    <property type="evidence" value="ECO:0007669"/>
    <property type="project" value="UniProtKB-UniRule"/>
</dbReference>
<dbReference type="GO" id="GO:0004619">
    <property type="term" value="F:phosphoglycerate mutase activity"/>
    <property type="evidence" value="ECO:0007669"/>
    <property type="project" value="UniProtKB-EC"/>
</dbReference>
<dbReference type="GO" id="GO:0006007">
    <property type="term" value="P:glucose catabolic process"/>
    <property type="evidence" value="ECO:0007669"/>
    <property type="project" value="InterPro"/>
</dbReference>
<dbReference type="GO" id="GO:0006096">
    <property type="term" value="P:glycolytic process"/>
    <property type="evidence" value="ECO:0007669"/>
    <property type="project" value="UniProtKB-UniRule"/>
</dbReference>
<dbReference type="CDD" id="cd16010">
    <property type="entry name" value="iPGM"/>
    <property type="match status" value="1"/>
</dbReference>
<dbReference type="FunFam" id="3.40.1450.10:FF:000001">
    <property type="entry name" value="2,3-bisphosphoglycerate-independent phosphoglycerate mutase"/>
    <property type="match status" value="1"/>
</dbReference>
<dbReference type="FunFam" id="3.40.720.10:FF:000001">
    <property type="entry name" value="2,3-bisphosphoglycerate-independent phosphoglycerate mutase"/>
    <property type="match status" value="1"/>
</dbReference>
<dbReference type="Gene3D" id="3.40.720.10">
    <property type="entry name" value="Alkaline Phosphatase, subunit A"/>
    <property type="match status" value="1"/>
</dbReference>
<dbReference type="Gene3D" id="3.40.1450.10">
    <property type="entry name" value="BPG-independent phosphoglycerate mutase, domain B"/>
    <property type="match status" value="1"/>
</dbReference>
<dbReference type="HAMAP" id="MF_01038">
    <property type="entry name" value="GpmI"/>
    <property type="match status" value="1"/>
</dbReference>
<dbReference type="InterPro" id="IPR017850">
    <property type="entry name" value="Alkaline_phosphatase_core_sf"/>
</dbReference>
<dbReference type="InterPro" id="IPR011258">
    <property type="entry name" value="BPG-indep_PGM_N"/>
</dbReference>
<dbReference type="InterPro" id="IPR006124">
    <property type="entry name" value="Metalloenzyme"/>
</dbReference>
<dbReference type="InterPro" id="IPR036646">
    <property type="entry name" value="PGAM_B_sf"/>
</dbReference>
<dbReference type="InterPro" id="IPR005995">
    <property type="entry name" value="Pgm_bpd_ind"/>
</dbReference>
<dbReference type="NCBIfam" id="TIGR01307">
    <property type="entry name" value="pgm_bpd_ind"/>
    <property type="match status" value="1"/>
</dbReference>
<dbReference type="NCBIfam" id="NF003897">
    <property type="entry name" value="PRK05434.1-5"/>
    <property type="match status" value="1"/>
</dbReference>
<dbReference type="PANTHER" id="PTHR31637">
    <property type="entry name" value="2,3-BISPHOSPHOGLYCERATE-INDEPENDENT PHOSPHOGLYCERATE MUTASE"/>
    <property type="match status" value="1"/>
</dbReference>
<dbReference type="PANTHER" id="PTHR31637:SF0">
    <property type="entry name" value="2,3-BISPHOSPHOGLYCERATE-INDEPENDENT PHOSPHOGLYCERATE MUTASE"/>
    <property type="match status" value="1"/>
</dbReference>
<dbReference type="Pfam" id="PF06415">
    <property type="entry name" value="iPGM_N"/>
    <property type="match status" value="1"/>
</dbReference>
<dbReference type="Pfam" id="PF01676">
    <property type="entry name" value="Metalloenzyme"/>
    <property type="match status" value="1"/>
</dbReference>
<dbReference type="PIRSF" id="PIRSF001492">
    <property type="entry name" value="IPGAM"/>
    <property type="match status" value="1"/>
</dbReference>
<dbReference type="SUPFAM" id="SSF64158">
    <property type="entry name" value="2,3-Bisphosphoglycerate-independent phosphoglycerate mutase, substrate-binding domain"/>
    <property type="match status" value="1"/>
</dbReference>
<dbReference type="SUPFAM" id="SSF53649">
    <property type="entry name" value="Alkaline phosphatase-like"/>
    <property type="match status" value="1"/>
</dbReference>